<organism>
    <name type="scientific">Haemophilus influenzae (strain ATCC 51907 / DSM 11121 / KW20 / Rd)</name>
    <dbReference type="NCBI Taxonomy" id="71421"/>
    <lineage>
        <taxon>Bacteria</taxon>
        <taxon>Pseudomonadati</taxon>
        <taxon>Pseudomonadota</taxon>
        <taxon>Gammaproteobacteria</taxon>
        <taxon>Pasteurellales</taxon>
        <taxon>Pasteurellaceae</taxon>
        <taxon>Haemophilus</taxon>
    </lineage>
</organism>
<feature type="chain" id="PRO_0000054305" description="Glycogen operon protein GlgX homolog">
    <location>
        <begin position="1"/>
        <end position="659"/>
    </location>
</feature>
<feature type="region of interest" description="Disordered" evidence="2">
    <location>
        <begin position="456"/>
        <end position="486"/>
    </location>
</feature>
<feature type="compositionally biased region" description="Basic and acidic residues" evidence="2">
    <location>
        <begin position="456"/>
        <end position="468"/>
    </location>
</feature>
<feature type="active site" description="Nucleophile" evidence="1">
    <location>
        <position position="333"/>
    </location>
</feature>
<feature type="active site" description="Proton donor" evidence="1">
    <location>
        <position position="369"/>
    </location>
</feature>
<feature type="site" description="Transition state stabilizer" evidence="1">
    <location>
        <position position="441"/>
    </location>
</feature>
<evidence type="ECO:0000250" key="1"/>
<evidence type="ECO:0000256" key="2">
    <source>
        <dbReference type="SAM" id="MobiDB-lite"/>
    </source>
</evidence>
<evidence type="ECO:0000305" key="3"/>
<reference key="1">
    <citation type="journal article" date="1995" name="Science">
        <title>Whole-genome random sequencing and assembly of Haemophilus influenzae Rd.</title>
        <authorList>
            <person name="Fleischmann R.D."/>
            <person name="Adams M.D."/>
            <person name="White O."/>
            <person name="Clayton R.A."/>
            <person name="Kirkness E.F."/>
            <person name="Kerlavage A.R."/>
            <person name="Bult C.J."/>
            <person name="Tomb J.-F."/>
            <person name="Dougherty B.A."/>
            <person name="Merrick J.M."/>
            <person name="McKenney K."/>
            <person name="Sutton G.G."/>
            <person name="FitzHugh W."/>
            <person name="Fields C.A."/>
            <person name="Gocayne J.D."/>
            <person name="Scott J.D."/>
            <person name="Shirley R."/>
            <person name="Liu L.-I."/>
            <person name="Glodek A."/>
            <person name="Kelley J.M."/>
            <person name="Weidman J.F."/>
            <person name="Phillips C.A."/>
            <person name="Spriggs T."/>
            <person name="Hedblom E."/>
            <person name="Cotton M.D."/>
            <person name="Utterback T.R."/>
            <person name="Hanna M.C."/>
            <person name="Nguyen D.T."/>
            <person name="Saudek D.M."/>
            <person name="Brandon R.C."/>
            <person name="Fine L.D."/>
            <person name="Fritchman J.L."/>
            <person name="Fuhrmann J.L."/>
            <person name="Geoghagen N.S.M."/>
            <person name="Gnehm C.L."/>
            <person name="McDonald L.A."/>
            <person name="Small K.V."/>
            <person name="Fraser C.M."/>
            <person name="Smith H.O."/>
            <person name="Venter J.C."/>
        </authorList>
    </citation>
    <scope>NUCLEOTIDE SEQUENCE [LARGE SCALE GENOMIC DNA]</scope>
    <source>
        <strain>ATCC 51907 / DSM 11121 / KW20 / Rd</strain>
    </source>
</reference>
<keyword id="KW-0320">Glycogen biosynthesis</keyword>
<keyword id="KW-0326">Glycosidase</keyword>
<keyword id="KW-0378">Hydrolase</keyword>
<keyword id="KW-1185">Reference proteome</keyword>
<comment type="similarity">
    <text evidence="3">Belongs to the glycosyl hydrolase 13 family.</text>
</comment>
<gene>
    <name type="primary">glgX</name>
    <name type="ordered locus">HI_1358</name>
</gene>
<proteinExistence type="inferred from homology"/>
<dbReference type="EC" id="3.2.1.-"/>
<dbReference type="EMBL" id="L42023">
    <property type="protein sequence ID" value="AAC23005.1"/>
    <property type="molecule type" value="Genomic_DNA"/>
</dbReference>
<dbReference type="PIR" id="A64119">
    <property type="entry name" value="A64119"/>
</dbReference>
<dbReference type="RefSeq" id="NP_439509.1">
    <property type="nucleotide sequence ID" value="NC_000907.1"/>
</dbReference>
<dbReference type="SMR" id="P45178"/>
<dbReference type="STRING" id="71421.HI_1358"/>
<dbReference type="CAZy" id="CBM48">
    <property type="family name" value="Carbohydrate-Binding Module Family 48"/>
</dbReference>
<dbReference type="CAZy" id="GH13">
    <property type="family name" value="Glycoside Hydrolase Family 13"/>
</dbReference>
<dbReference type="DNASU" id="949470"/>
<dbReference type="EnsemblBacteria" id="AAC23005">
    <property type="protein sequence ID" value="AAC23005"/>
    <property type="gene ID" value="HI_1358"/>
</dbReference>
<dbReference type="KEGG" id="hin:HI_1358"/>
<dbReference type="PATRIC" id="fig|71421.8.peg.1411"/>
<dbReference type="eggNOG" id="COG1523">
    <property type="taxonomic scope" value="Bacteria"/>
</dbReference>
<dbReference type="HOGENOM" id="CLU_011725_1_1_6"/>
<dbReference type="OrthoDB" id="3236218at2"/>
<dbReference type="PhylomeDB" id="P45178"/>
<dbReference type="BioCyc" id="HINF71421:G1GJ1-1383-MONOMER"/>
<dbReference type="Proteomes" id="UP000000579">
    <property type="component" value="Chromosome"/>
</dbReference>
<dbReference type="GO" id="GO:0004133">
    <property type="term" value="F:glycogen debranching enzyme activity"/>
    <property type="evidence" value="ECO:0007669"/>
    <property type="project" value="InterPro"/>
</dbReference>
<dbReference type="GO" id="GO:0004553">
    <property type="term" value="F:hydrolase activity, hydrolyzing O-glycosyl compounds"/>
    <property type="evidence" value="ECO:0007669"/>
    <property type="project" value="InterPro"/>
</dbReference>
<dbReference type="GO" id="GO:0005978">
    <property type="term" value="P:glycogen biosynthetic process"/>
    <property type="evidence" value="ECO:0007669"/>
    <property type="project" value="UniProtKB-KW"/>
</dbReference>
<dbReference type="GO" id="GO:0005980">
    <property type="term" value="P:glycogen catabolic process"/>
    <property type="evidence" value="ECO:0007669"/>
    <property type="project" value="InterPro"/>
</dbReference>
<dbReference type="CDD" id="cd11326">
    <property type="entry name" value="AmyAc_Glg_debranch"/>
    <property type="match status" value="1"/>
</dbReference>
<dbReference type="CDD" id="cd02856">
    <property type="entry name" value="E_set_GDE_Isoamylase_N"/>
    <property type="match status" value="1"/>
</dbReference>
<dbReference type="Gene3D" id="3.20.20.80">
    <property type="entry name" value="Glycosidases"/>
    <property type="match status" value="1"/>
</dbReference>
<dbReference type="Gene3D" id="2.60.40.1180">
    <property type="entry name" value="Golgi alpha-mannosidase II"/>
    <property type="match status" value="1"/>
</dbReference>
<dbReference type="Gene3D" id="2.60.40.10">
    <property type="entry name" value="Immunoglobulins"/>
    <property type="match status" value="1"/>
</dbReference>
<dbReference type="InterPro" id="IPR040784">
    <property type="entry name" value="GlgX_C"/>
</dbReference>
<dbReference type="InterPro" id="IPR044505">
    <property type="entry name" value="GlgX_Isoamylase_N_E_set"/>
</dbReference>
<dbReference type="InterPro" id="IPR006047">
    <property type="entry name" value="Glyco_hydro_13_cat_dom"/>
</dbReference>
<dbReference type="InterPro" id="IPR004193">
    <property type="entry name" value="Glyco_hydro_13_N"/>
</dbReference>
<dbReference type="InterPro" id="IPR013780">
    <property type="entry name" value="Glyco_hydro_b"/>
</dbReference>
<dbReference type="InterPro" id="IPR011837">
    <property type="entry name" value="Glycogen_debranch_GlgX"/>
</dbReference>
<dbReference type="InterPro" id="IPR017853">
    <property type="entry name" value="Glycoside_hydrolase_SF"/>
</dbReference>
<dbReference type="InterPro" id="IPR013783">
    <property type="entry name" value="Ig-like_fold"/>
</dbReference>
<dbReference type="InterPro" id="IPR014756">
    <property type="entry name" value="Ig_E-set"/>
</dbReference>
<dbReference type="NCBIfam" id="TIGR02100">
    <property type="entry name" value="glgX_debranch"/>
    <property type="match status" value="1"/>
</dbReference>
<dbReference type="PANTHER" id="PTHR43002">
    <property type="entry name" value="GLYCOGEN DEBRANCHING ENZYME"/>
    <property type="match status" value="1"/>
</dbReference>
<dbReference type="Pfam" id="PF00128">
    <property type="entry name" value="Alpha-amylase"/>
    <property type="match status" value="1"/>
</dbReference>
<dbReference type="Pfam" id="PF02922">
    <property type="entry name" value="CBM_48"/>
    <property type="match status" value="1"/>
</dbReference>
<dbReference type="Pfam" id="PF18390">
    <property type="entry name" value="GlgX_C"/>
    <property type="match status" value="1"/>
</dbReference>
<dbReference type="SMART" id="SM00642">
    <property type="entry name" value="Aamy"/>
    <property type="match status" value="1"/>
</dbReference>
<dbReference type="SUPFAM" id="SSF51445">
    <property type="entry name" value="(Trans)glycosidases"/>
    <property type="match status" value="1"/>
</dbReference>
<dbReference type="SUPFAM" id="SSF81296">
    <property type="entry name" value="E set domains"/>
    <property type="match status" value="1"/>
</dbReference>
<dbReference type="SUPFAM" id="SSF51011">
    <property type="entry name" value="Glycosyl hydrolase domain"/>
    <property type="match status" value="1"/>
</dbReference>
<name>GLGX_HAEIN</name>
<accession>P45178</accession>
<sequence length="659" mass="75290">MFKIYNNGNPIPMGYSQAVENNVQITNFALFSAAAIGVELCLFDEQNQETRLPMVRTENVWHLAVTGVKTGTEYAFRIHGEFANPQKLILDPYAKAVNGKPDLSSEESRSWFLLSDNRDNAHLAPRAVVISEEFDWENDTSPNTPWAETIVYELHVKGFSQLNEKIPAALRGTYTGLAHPVNLAYLKELGVTAVELLPVNFHINEPHLQARGLQNYWGYNPLAMFAVEPKYAATNNPLAEFKTMVKAFHKAGIEVILDVVFNHSAESEQTYPTFSQRGIDDQTYYWRNDQGRYINWTGCGNMLNLSSDVGRKWVVDCLRYWVEQCHIDGFRFDLATVLGRDTPDFNSSAQLFTDIKNEPSLQNIKLIAEPWDIGHYGYQVGNFPSYFAEWNDRFRDDLCRFWLWKSGEIGAFAERFAGSSDLFKKNDRLPHTTLNFITAHDGFTLKDLVSYNQKHNETNGEENRDGRNENYSYNHGVEGSTESLSEPQKSAVENNRTFAQSGLLMSLLLANGTPMLLAGDEFGNTQYGNNNAYCQDNEITWLKWANFNEELFELTKQTIALRKQIGSLNKDQWWSDENVQWLNIVGEPMTVEDWQNQQTKALQVVLDNRWLLLINAKAEGQMFHLPNRKWKPQIGTHNVTLEAQQAELSSMGFCMLNDE</sequence>
<protein>
    <recommendedName>
        <fullName>Glycogen operon protein GlgX homolog</fullName>
        <ecNumber>3.2.1.-</ecNumber>
    </recommendedName>
</protein>